<keyword id="KW-1185">Reference proteome</keyword>
<keyword id="KW-0687">Ribonucleoprotein</keyword>
<keyword id="KW-0689">Ribosomal protein</keyword>
<evidence type="ECO:0000255" key="1">
    <source>
        <dbReference type="HAMAP-Rule" id="MF_00391"/>
    </source>
</evidence>
<evidence type="ECO:0000256" key="2">
    <source>
        <dbReference type="SAM" id="MobiDB-lite"/>
    </source>
</evidence>
<evidence type="ECO:0000305" key="3"/>
<dbReference type="EMBL" id="CP000435">
    <property type="protein sequence ID" value="ABI46385.1"/>
    <property type="molecule type" value="Genomic_DNA"/>
</dbReference>
<dbReference type="RefSeq" id="WP_011620012.1">
    <property type="nucleotide sequence ID" value="NC_008319.1"/>
</dbReference>
<dbReference type="SMR" id="Q0I8C2"/>
<dbReference type="STRING" id="64471.sync_2098"/>
<dbReference type="KEGG" id="syg:sync_2098"/>
<dbReference type="eggNOG" id="COG0230">
    <property type="taxonomic scope" value="Bacteria"/>
</dbReference>
<dbReference type="HOGENOM" id="CLU_129938_2_1_3"/>
<dbReference type="Proteomes" id="UP000001961">
    <property type="component" value="Chromosome"/>
</dbReference>
<dbReference type="GO" id="GO:1990904">
    <property type="term" value="C:ribonucleoprotein complex"/>
    <property type="evidence" value="ECO:0007669"/>
    <property type="project" value="UniProtKB-KW"/>
</dbReference>
<dbReference type="GO" id="GO:0005840">
    <property type="term" value="C:ribosome"/>
    <property type="evidence" value="ECO:0007669"/>
    <property type="project" value="UniProtKB-KW"/>
</dbReference>
<dbReference type="GO" id="GO:0003735">
    <property type="term" value="F:structural constituent of ribosome"/>
    <property type="evidence" value="ECO:0007669"/>
    <property type="project" value="InterPro"/>
</dbReference>
<dbReference type="GO" id="GO:0006412">
    <property type="term" value="P:translation"/>
    <property type="evidence" value="ECO:0007669"/>
    <property type="project" value="UniProtKB-UniRule"/>
</dbReference>
<dbReference type="Gene3D" id="1.10.287.3980">
    <property type="match status" value="1"/>
</dbReference>
<dbReference type="HAMAP" id="MF_00391">
    <property type="entry name" value="Ribosomal_bL34"/>
    <property type="match status" value="1"/>
</dbReference>
<dbReference type="InterPro" id="IPR000271">
    <property type="entry name" value="Ribosomal_bL34"/>
</dbReference>
<dbReference type="InterPro" id="IPR020939">
    <property type="entry name" value="Ribosomal_bL34_CS"/>
</dbReference>
<dbReference type="NCBIfam" id="TIGR01030">
    <property type="entry name" value="rpmH_bact"/>
    <property type="match status" value="1"/>
</dbReference>
<dbReference type="Pfam" id="PF00468">
    <property type="entry name" value="Ribosomal_L34"/>
    <property type="match status" value="1"/>
</dbReference>
<dbReference type="PROSITE" id="PS00784">
    <property type="entry name" value="RIBOSOMAL_L34"/>
    <property type="match status" value="1"/>
</dbReference>
<comment type="similarity">
    <text evidence="1">Belongs to the bacterial ribosomal protein bL34 family.</text>
</comment>
<organism>
    <name type="scientific">Synechococcus sp. (strain CC9311)</name>
    <dbReference type="NCBI Taxonomy" id="64471"/>
    <lineage>
        <taxon>Bacteria</taxon>
        <taxon>Bacillati</taxon>
        <taxon>Cyanobacteriota</taxon>
        <taxon>Cyanophyceae</taxon>
        <taxon>Synechococcales</taxon>
        <taxon>Synechococcaceae</taxon>
        <taxon>Synechococcus</taxon>
    </lineage>
</organism>
<proteinExistence type="inferred from homology"/>
<sequence>MTKRTFGGTSRKRKRVSGFRVRMRSHTGRRVIRTRRKRGRSRLAA</sequence>
<protein>
    <recommendedName>
        <fullName evidence="1">Large ribosomal subunit protein bL34</fullName>
    </recommendedName>
    <alternativeName>
        <fullName evidence="3">50S ribosomal protein L34</fullName>
    </alternativeName>
</protein>
<accession>Q0I8C2</accession>
<name>RL34_SYNS3</name>
<reference key="1">
    <citation type="journal article" date="2006" name="Proc. Natl. Acad. Sci. U.S.A.">
        <title>Genome sequence of Synechococcus CC9311: insights into adaptation to a coastal environment.</title>
        <authorList>
            <person name="Palenik B."/>
            <person name="Ren Q."/>
            <person name="Dupont C.L."/>
            <person name="Myers G.S."/>
            <person name="Heidelberg J.F."/>
            <person name="Badger J.H."/>
            <person name="Madupu R."/>
            <person name="Nelson W.C."/>
            <person name="Brinkac L.M."/>
            <person name="Dodson R.J."/>
            <person name="Durkin A.S."/>
            <person name="Daugherty S.C."/>
            <person name="Sullivan S.A."/>
            <person name="Khouri H."/>
            <person name="Mohamoud Y."/>
            <person name="Halpin R."/>
            <person name="Paulsen I.T."/>
        </authorList>
    </citation>
    <scope>NUCLEOTIDE SEQUENCE [LARGE SCALE GENOMIC DNA]</scope>
    <source>
        <strain>CC9311</strain>
    </source>
</reference>
<gene>
    <name evidence="1" type="primary">rpmH</name>
    <name evidence="1" type="synonym">rpl34</name>
    <name type="ordered locus">sync_2098</name>
</gene>
<feature type="chain" id="PRO_1000013478" description="Large ribosomal subunit protein bL34">
    <location>
        <begin position="1"/>
        <end position="45"/>
    </location>
</feature>
<feature type="region of interest" description="Disordered" evidence="2">
    <location>
        <begin position="1"/>
        <end position="45"/>
    </location>
</feature>
<feature type="compositionally biased region" description="Basic residues" evidence="2">
    <location>
        <begin position="10"/>
        <end position="45"/>
    </location>
</feature>